<name>LEU1_XANE5</name>
<proteinExistence type="inferred from homology"/>
<gene>
    <name evidence="1" type="primary">leuA</name>
    <name type="ordered locus">XCV3583</name>
</gene>
<reference key="1">
    <citation type="journal article" date="2005" name="J. Bacteriol.">
        <title>Insights into genome plasticity and pathogenicity of the plant pathogenic Bacterium Xanthomonas campestris pv. vesicatoria revealed by the complete genome sequence.</title>
        <authorList>
            <person name="Thieme F."/>
            <person name="Koebnik R."/>
            <person name="Bekel T."/>
            <person name="Berger C."/>
            <person name="Boch J."/>
            <person name="Buettner D."/>
            <person name="Caldana C."/>
            <person name="Gaigalat L."/>
            <person name="Goesmann A."/>
            <person name="Kay S."/>
            <person name="Kirchner O."/>
            <person name="Lanz C."/>
            <person name="Linke B."/>
            <person name="McHardy A.C."/>
            <person name="Meyer F."/>
            <person name="Mittenhuber G."/>
            <person name="Nies D.H."/>
            <person name="Niesbach-Kloesgen U."/>
            <person name="Patschkowski T."/>
            <person name="Rueckert C."/>
            <person name="Rupp O."/>
            <person name="Schneiker S."/>
            <person name="Schuster S.C."/>
            <person name="Vorhoelter F.J."/>
            <person name="Weber E."/>
            <person name="Puehler A."/>
            <person name="Bonas U."/>
            <person name="Bartels D."/>
            <person name="Kaiser O."/>
        </authorList>
    </citation>
    <scope>NUCLEOTIDE SEQUENCE [LARGE SCALE GENOMIC DNA]</scope>
    <source>
        <strain>85-10</strain>
    </source>
</reference>
<comment type="function">
    <text evidence="1">Catalyzes the condensation of the acetyl group of acetyl-CoA with 3-methyl-2-oxobutanoate (2-ketoisovalerate) to form 3-carboxy-3-hydroxy-4-methylpentanoate (2-isopropylmalate).</text>
</comment>
<comment type="catalytic activity">
    <reaction evidence="1">
        <text>3-methyl-2-oxobutanoate + acetyl-CoA + H2O = (2S)-2-isopropylmalate + CoA + H(+)</text>
        <dbReference type="Rhea" id="RHEA:21524"/>
        <dbReference type="ChEBI" id="CHEBI:1178"/>
        <dbReference type="ChEBI" id="CHEBI:11851"/>
        <dbReference type="ChEBI" id="CHEBI:15377"/>
        <dbReference type="ChEBI" id="CHEBI:15378"/>
        <dbReference type="ChEBI" id="CHEBI:57287"/>
        <dbReference type="ChEBI" id="CHEBI:57288"/>
        <dbReference type="EC" id="2.3.3.13"/>
    </reaction>
</comment>
<comment type="cofactor">
    <cofactor evidence="1">
        <name>Mn(2+)</name>
        <dbReference type="ChEBI" id="CHEBI:29035"/>
    </cofactor>
</comment>
<comment type="pathway">
    <text evidence="1">Amino-acid biosynthesis; L-leucine biosynthesis; L-leucine from 3-methyl-2-oxobutanoate: step 1/4.</text>
</comment>
<comment type="subunit">
    <text evidence="1">Homodimer.</text>
</comment>
<comment type="subcellular location">
    <subcellularLocation>
        <location evidence="1">Cytoplasm</location>
    </subcellularLocation>
</comment>
<comment type="similarity">
    <text evidence="1">Belongs to the alpha-IPM synthase/homocitrate synthase family. LeuA type 1 subfamily.</text>
</comment>
<evidence type="ECO:0000255" key="1">
    <source>
        <dbReference type="HAMAP-Rule" id="MF_01025"/>
    </source>
</evidence>
<keyword id="KW-0028">Amino-acid biosynthesis</keyword>
<keyword id="KW-0100">Branched-chain amino acid biosynthesis</keyword>
<keyword id="KW-0963">Cytoplasm</keyword>
<keyword id="KW-0432">Leucine biosynthesis</keyword>
<keyword id="KW-0464">Manganese</keyword>
<keyword id="KW-0479">Metal-binding</keyword>
<keyword id="KW-0808">Transferase</keyword>
<protein>
    <recommendedName>
        <fullName evidence="1">2-isopropylmalate synthase</fullName>
        <ecNumber evidence="1">2.3.3.13</ecNumber>
    </recommendedName>
    <alternativeName>
        <fullName evidence="1">Alpha-IPM synthase</fullName>
    </alternativeName>
    <alternativeName>
        <fullName evidence="1">Alpha-isopropylmalate synthase</fullName>
    </alternativeName>
</protein>
<organism>
    <name type="scientific">Xanthomonas euvesicatoria pv. vesicatoria (strain 85-10)</name>
    <name type="common">Xanthomonas campestris pv. vesicatoria</name>
    <dbReference type="NCBI Taxonomy" id="316273"/>
    <lineage>
        <taxon>Bacteria</taxon>
        <taxon>Pseudomonadati</taxon>
        <taxon>Pseudomonadota</taxon>
        <taxon>Gammaproteobacteria</taxon>
        <taxon>Lysobacterales</taxon>
        <taxon>Lysobacteraceae</taxon>
        <taxon>Xanthomonas</taxon>
    </lineage>
</organism>
<sequence>MNTTVSNQTPRIRIFDTTLRDGEQSPGCSMTPQQKLVMARALDELGVDIIETGFPASSHSDREAVAMMGRELRRPTLAVLSRCLQADIETSAKALETAANPRLHVFLSTSPLHREHKLRMSREQVLESVHRHVTLARGYIDDVEFSAEDATRTEEDFLAEVTRVAIAAGATTINLPDTVGFTTPEEIRGMFSRLIASVEGADKVIFSAHCHNDLGLAVANSLAAIEGGARQVECTINGIGERAGNCALEEITMALKVRGAFYNIDSAINTPRIVSTSQLLQRLVGMPVQRNKAVVGGNAFAHESGIHQHGMLRHRGTYEIMRPEDVGWESSQMVLGRHSGRAAVEQRLRALGYLLEEEEVKLVFEQFKALCEKQRVVTDADLQALMQDATVQEGYRLASMTISDVGSRANALVELSDPEGNRVAETAQGNGPVDALFGALASATGVKLELDSYQVHSVGIGADARGEASLSVRHDGVEYEGTGTSKDIIEASALAWLDVANRLLRQRERGVVAGKTAAVA</sequence>
<feature type="chain" id="PRO_1000149332" description="2-isopropylmalate synthase">
    <location>
        <begin position="1"/>
        <end position="520"/>
    </location>
</feature>
<feature type="domain" description="Pyruvate carboxyltransferase" evidence="1">
    <location>
        <begin position="12"/>
        <end position="274"/>
    </location>
</feature>
<feature type="region of interest" description="Regulatory domain" evidence="1">
    <location>
        <begin position="396"/>
        <end position="520"/>
    </location>
</feature>
<feature type="binding site" evidence="1">
    <location>
        <position position="21"/>
    </location>
    <ligand>
        <name>Mn(2+)</name>
        <dbReference type="ChEBI" id="CHEBI:29035"/>
    </ligand>
</feature>
<feature type="binding site" evidence="1">
    <location>
        <position position="209"/>
    </location>
    <ligand>
        <name>Mn(2+)</name>
        <dbReference type="ChEBI" id="CHEBI:29035"/>
    </ligand>
</feature>
<feature type="binding site" evidence="1">
    <location>
        <position position="211"/>
    </location>
    <ligand>
        <name>Mn(2+)</name>
        <dbReference type="ChEBI" id="CHEBI:29035"/>
    </ligand>
</feature>
<feature type="binding site" evidence="1">
    <location>
        <position position="245"/>
    </location>
    <ligand>
        <name>Mn(2+)</name>
        <dbReference type="ChEBI" id="CHEBI:29035"/>
    </ligand>
</feature>
<dbReference type="EC" id="2.3.3.13" evidence="1"/>
<dbReference type="EMBL" id="AM039952">
    <property type="protein sequence ID" value="CAJ25314.1"/>
    <property type="molecule type" value="Genomic_DNA"/>
</dbReference>
<dbReference type="RefSeq" id="WP_011348521.1">
    <property type="nucleotide sequence ID" value="NZ_CP017190.1"/>
</dbReference>
<dbReference type="SMR" id="Q3BPJ9"/>
<dbReference type="STRING" id="456327.BJD11_04800"/>
<dbReference type="KEGG" id="xcv:XCV3583"/>
<dbReference type="eggNOG" id="COG0119">
    <property type="taxonomic scope" value="Bacteria"/>
</dbReference>
<dbReference type="HOGENOM" id="CLU_022158_0_1_6"/>
<dbReference type="UniPathway" id="UPA00048">
    <property type="reaction ID" value="UER00070"/>
</dbReference>
<dbReference type="Proteomes" id="UP000007069">
    <property type="component" value="Chromosome"/>
</dbReference>
<dbReference type="GO" id="GO:0005829">
    <property type="term" value="C:cytosol"/>
    <property type="evidence" value="ECO:0007669"/>
    <property type="project" value="TreeGrafter"/>
</dbReference>
<dbReference type="GO" id="GO:0003852">
    <property type="term" value="F:2-isopropylmalate synthase activity"/>
    <property type="evidence" value="ECO:0007669"/>
    <property type="project" value="UniProtKB-UniRule"/>
</dbReference>
<dbReference type="GO" id="GO:0003985">
    <property type="term" value="F:acetyl-CoA C-acetyltransferase activity"/>
    <property type="evidence" value="ECO:0007669"/>
    <property type="project" value="UniProtKB-UniRule"/>
</dbReference>
<dbReference type="GO" id="GO:0030145">
    <property type="term" value="F:manganese ion binding"/>
    <property type="evidence" value="ECO:0007669"/>
    <property type="project" value="UniProtKB-UniRule"/>
</dbReference>
<dbReference type="GO" id="GO:0009098">
    <property type="term" value="P:L-leucine biosynthetic process"/>
    <property type="evidence" value="ECO:0007669"/>
    <property type="project" value="UniProtKB-UniRule"/>
</dbReference>
<dbReference type="CDD" id="cd07940">
    <property type="entry name" value="DRE_TIM_IPMS"/>
    <property type="match status" value="1"/>
</dbReference>
<dbReference type="FunFam" id="1.10.238.260:FF:000001">
    <property type="entry name" value="2-isopropylmalate synthase"/>
    <property type="match status" value="1"/>
</dbReference>
<dbReference type="FunFam" id="3.20.20.70:FF:000010">
    <property type="entry name" value="2-isopropylmalate synthase"/>
    <property type="match status" value="1"/>
</dbReference>
<dbReference type="FunFam" id="3.30.160.270:FF:000003">
    <property type="entry name" value="2-isopropylmalate synthase"/>
    <property type="match status" value="1"/>
</dbReference>
<dbReference type="Gene3D" id="1.10.238.260">
    <property type="match status" value="1"/>
</dbReference>
<dbReference type="Gene3D" id="3.30.160.270">
    <property type="match status" value="1"/>
</dbReference>
<dbReference type="Gene3D" id="3.20.20.70">
    <property type="entry name" value="Aldolase class I"/>
    <property type="match status" value="1"/>
</dbReference>
<dbReference type="HAMAP" id="MF_01025">
    <property type="entry name" value="LeuA_type1"/>
    <property type="match status" value="1"/>
</dbReference>
<dbReference type="InterPro" id="IPR050073">
    <property type="entry name" value="2-IPM_HCS-like"/>
</dbReference>
<dbReference type="InterPro" id="IPR013709">
    <property type="entry name" value="2-isopropylmalate_synth_dimer"/>
</dbReference>
<dbReference type="InterPro" id="IPR002034">
    <property type="entry name" value="AIPM/Hcit_synth_CS"/>
</dbReference>
<dbReference type="InterPro" id="IPR013785">
    <property type="entry name" value="Aldolase_TIM"/>
</dbReference>
<dbReference type="InterPro" id="IPR054691">
    <property type="entry name" value="LeuA/HCS_post-cat"/>
</dbReference>
<dbReference type="InterPro" id="IPR036230">
    <property type="entry name" value="LeuA_allosteric_dom_sf"/>
</dbReference>
<dbReference type="InterPro" id="IPR005671">
    <property type="entry name" value="LeuA_bact_synth"/>
</dbReference>
<dbReference type="InterPro" id="IPR000891">
    <property type="entry name" value="PYR_CT"/>
</dbReference>
<dbReference type="NCBIfam" id="TIGR00973">
    <property type="entry name" value="leuA_bact"/>
    <property type="match status" value="1"/>
</dbReference>
<dbReference type="NCBIfam" id="NF002086">
    <property type="entry name" value="PRK00915.1-3"/>
    <property type="match status" value="1"/>
</dbReference>
<dbReference type="PANTHER" id="PTHR10277:SF9">
    <property type="entry name" value="2-ISOPROPYLMALATE SYNTHASE 1, CHLOROPLASTIC-RELATED"/>
    <property type="match status" value="1"/>
</dbReference>
<dbReference type="PANTHER" id="PTHR10277">
    <property type="entry name" value="HOMOCITRATE SYNTHASE-RELATED"/>
    <property type="match status" value="1"/>
</dbReference>
<dbReference type="Pfam" id="PF22617">
    <property type="entry name" value="HCS_D2"/>
    <property type="match status" value="1"/>
</dbReference>
<dbReference type="Pfam" id="PF00682">
    <property type="entry name" value="HMGL-like"/>
    <property type="match status" value="1"/>
</dbReference>
<dbReference type="Pfam" id="PF08502">
    <property type="entry name" value="LeuA_dimer"/>
    <property type="match status" value="1"/>
</dbReference>
<dbReference type="SMART" id="SM00917">
    <property type="entry name" value="LeuA_dimer"/>
    <property type="match status" value="1"/>
</dbReference>
<dbReference type="SUPFAM" id="SSF110921">
    <property type="entry name" value="2-isopropylmalate synthase LeuA, allosteric (dimerisation) domain"/>
    <property type="match status" value="1"/>
</dbReference>
<dbReference type="SUPFAM" id="SSF51569">
    <property type="entry name" value="Aldolase"/>
    <property type="match status" value="1"/>
</dbReference>
<dbReference type="PROSITE" id="PS00815">
    <property type="entry name" value="AIPM_HOMOCIT_SYNTH_1"/>
    <property type="match status" value="1"/>
</dbReference>
<dbReference type="PROSITE" id="PS00816">
    <property type="entry name" value="AIPM_HOMOCIT_SYNTH_2"/>
    <property type="match status" value="1"/>
</dbReference>
<dbReference type="PROSITE" id="PS50991">
    <property type="entry name" value="PYR_CT"/>
    <property type="match status" value="1"/>
</dbReference>
<accession>Q3BPJ9</accession>